<accession>A5GFC7</accession>
<evidence type="ECO:0000255" key="1">
    <source>
        <dbReference type="HAMAP-Rule" id="MF_00213"/>
    </source>
</evidence>
<feature type="chain" id="PRO_1000078039" description="Hydrogenase maturation factor HypA">
    <location>
        <begin position="1"/>
        <end position="110"/>
    </location>
</feature>
<feature type="binding site" evidence="1">
    <location>
        <position position="2"/>
    </location>
    <ligand>
        <name>Ni(2+)</name>
        <dbReference type="ChEBI" id="CHEBI:49786"/>
    </ligand>
</feature>
<feature type="binding site" evidence="1">
    <location>
        <position position="70"/>
    </location>
    <ligand>
        <name>Zn(2+)</name>
        <dbReference type="ChEBI" id="CHEBI:29105"/>
    </ligand>
</feature>
<feature type="binding site" evidence="1">
    <location>
        <position position="73"/>
    </location>
    <ligand>
        <name>Zn(2+)</name>
        <dbReference type="ChEBI" id="CHEBI:29105"/>
    </ligand>
</feature>
<feature type="binding site" evidence="1">
    <location>
        <position position="86"/>
    </location>
    <ligand>
        <name>Zn(2+)</name>
        <dbReference type="ChEBI" id="CHEBI:29105"/>
    </ligand>
</feature>
<feature type="binding site" evidence="1">
    <location>
        <position position="89"/>
    </location>
    <ligand>
        <name>Zn(2+)</name>
        <dbReference type="ChEBI" id="CHEBI:29105"/>
    </ligand>
</feature>
<name>HYPA_GEOUR</name>
<reference key="1">
    <citation type="submission" date="2007-05" db="EMBL/GenBank/DDBJ databases">
        <title>Complete sequence of Geobacter uraniireducens Rf4.</title>
        <authorList>
            <consortium name="US DOE Joint Genome Institute"/>
            <person name="Copeland A."/>
            <person name="Lucas S."/>
            <person name="Lapidus A."/>
            <person name="Barry K."/>
            <person name="Detter J.C."/>
            <person name="Glavina del Rio T."/>
            <person name="Hammon N."/>
            <person name="Israni S."/>
            <person name="Dalin E."/>
            <person name="Tice H."/>
            <person name="Pitluck S."/>
            <person name="Chertkov O."/>
            <person name="Brettin T."/>
            <person name="Bruce D."/>
            <person name="Han C."/>
            <person name="Schmutz J."/>
            <person name="Larimer F."/>
            <person name="Land M."/>
            <person name="Hauser L."/>
            <person name="Kyrpides N."/>
            <person name="Mikhailova N."/>
            <person name="Shelobolina E."/>
            <person name="Aklujkar M."/>
            <person name="Lovley D."/>
            <person name="Richardson P."/>
        </authorList>
    </citation>
    <scope>NUCLEOTIDE SEQUENCE [LARGE SCALE GENOMIC DNA]</scope>
    <source>
        <strain>ATCC BAA-1134 / JCM 13001 / Rf4</strain>
    </source>
</reference>
<organism>
    <name type="scientific">Geotalea uraniireducens (strain Rf4)</name>
    <name type="common">Geobacter uraniireducens</name>
    <dbReference type="NCBI Taxonomy" id="351605"/>
    <lineage>
        <taxon>Bacteria</taxon>
        <taxon>Pseudomonadati</taxon>
        <taxon>Thermodesulfobacteriota</taxon>
        <taxon>Desulfuromonadia</taxon>
        <taxon>Geobacterales</taxon>
        <taxon>Geobacteraceae</taxon>
        <taxon>Geotalea</taxon>
    </lineage>
</organism>
<comment type="function">
    <text evidence="1">Involved in the maturation of [NiFe] hydrogenases. Required for nickel insertion into the metal center of the hydrogenase.</text>
</comment>
<comment type="similarity">
    <text evidence="1">Belongs to the HypA/HybF family.</text>
</comment>
<proteinExistence type="inferred from homology"/>
<sequence length="110" mass="11957">MHEMSITQSVVEICTQNAGGRRVTAVILEIGDLSGVVPDAIEFCFEACTRDTQLDGARLLIERVQALGRCRDCKAEFALSAYYDPCPACGGFGVDVLSGEELRVKELEVE</sequence>
<gene>
    <name evidence="1" type="primary">hypA</name>
    <name type="ordered locus">Gura_1942</name>
</gene>
<protein>
    <recommendedName>
        <fullName evidence="1">Hydrogenase maturation factor HypA</fullName>
    </recommendedName>
</protein>
<keyword id="KW-0479">Metal-binding</keyword>
<keyword id="KW-0533">Nickel</keyword>
<keyword id="KW-1185">Reference proteome</keyword>
<keyword id="KW-0862">Zinc</keyword>
<dbReference type="EMBL" id="CP000698">
    <property type="protein sequence ID" value="ABQ26132.1"/>
    <property type="molecule type" value="Genomic_DNA"/>
</dbReference>
<dbReference type="RefSeq" id="WP_011938835.1">
    <property type="nucleotide sequence ID" value="NC_009483.1"/>
</dbReference>
<dbReference type="SMR" id="A5GFC7"/>
<dbReference type="STRING" id="351605.Gura_1942"/>
<dbReference type="KEGG" id="gur:Gura_1942"/>
<dbReference type="HOGENOM" id="CLU_126929_3_0_7"/>
<dbReference type="OrthoDB" id="9800361at2"/>
<dbReference type="Proteomes" id="UP000006695">
    <property type="component" value="Chromosome"/>
</dbReference>
<dbReference type="GO" id="GO:0016151">
    <property type="term" value="F:nickel cation binding"/>
    <property type="evidence" value="ECO:0007669"/>
    <property type="project" value="UniProtKB-UniRule"/>
</dbReference>
<dbReference type="GO" id="GO:0008270">
    <property type="term" value="F:zinc ion binding"/>
    <property type="evidence" value="ECO:0007669"/>
    <property type="project" value="UniProtKB-UniRule"/>
</dbReference>
<dbReference type="GO" id="GO:0051604">
    <property type="term" value="P:protein maturation"/>
    <property type="evidence" value="ECO:0007669"/>
    <property type="project" value="InterPro"/>
</dbReference>
<dbReference type="GO" id="GO:0036211">
    <property type="term" value="P:protein modification process"/>
    <property type="evidence" value="ECO:0007669"/>
    <property type="project" value="UniProtKB-UniRule"/>
</dbReference>
<dbReference type="Gene3D" id="3.30.2320.80">
    <property type="match status" value="1"/>
</dbReference>
<dbReference type="HAMAP" id="MF_00213">
    <property type="entry name" value="HypA_HybF"/>
    <property type="match status" value="1"/>
</dbReference>
<dbReference type="InterPro" id="IPR020538">
    <property type="entry name" value="Hydgase_Ni_incorp_HypA/HybF_CS"/>
</dbReference>
<dbReference type="InterPro" id="IPR000688">
    <property type="entry name" value="HypA/HybF"/>
</dbReference>
<dbReference type="NCBIfam" id="TIGR00100">
    <property type="entry name" value="hypA"/>
    <property type="match status" value="1"/>
</dbReference>
<dbReference type="PANTHER" id="PTHR34535">
    <property type="entry name" value="HYDROGENASE MATURATION FACTOR HYPA"/>
    <property type="match status" value="1"/>
</dbReference>
<dbReference type="PANTHER" id="PTHR34535:SF3">
    <property type="entry name" value="HYDROGENASE MATURATION FACTOR HYPA"/>
    <property type="match status" value="1"/>
</dbReference>
<dbReference type="Pfam" id="PF01155">
    <property type="entry name" value="HypA"/>
    <property type="match status" value="1"/>
</dbReference>
<dbReference type="PIRSF" id="PIRSF004761">
    <property type="entry name" value="Hydrgn_mat_HypA"/>
    <property type="match status" value="1"/>
</dbReference>
<dbReference type="PROSITE" id="PS01249">
    <property type="entry name" value="HYPA"/>
    <property type="match status" value="1"/>
</dbReference>